<evidence type="ECO:0000255" key="1">
    <source>
        <dbReference type="PROSITE-ProRule" id="PRU00253"/>
    </source>
</evidence>
<evidence type="ECO:0000269" key="2">
    <source>
    </source>
</evidence>
<evidence type="ECO:0000305" key="3"/>
<evidence type="ECO:0007829" key="4">
    <source>
        <dbReference type="PDB" id="2HXR"/>
    </source>
</evidence>
<dbReference type="EMBL" id="M93053">
    <property type="protein sequence ID" value="AAA23628.1"/>
    <property type="molecule type" value="Genomic_DNA"/>
</dbReference>
<dbReference type="EMBL" id="U73857">
    <property type="protein sequence ID" value="AAB18062.1"/>
    <property type="status" value="ALT_INIT"/>
    <property type="molecule type" value="Genomic_DNA"/>
</dbReference>
<dbReference type="EMBL" id="U00096">
    <property type="protein sequence ID" value="AAC73441.3"/>
    <property type="molecule type" value="Genomic_DNA"/>
</dbReference>
<dbReference type="EMBL" id="AP009048">
    <property type="protein sequence ID" value="BAE76120.1"/>
    <property type="molecule type" value="Genomic_DNA"/>
</dbReference>
<dbReference type="PIR" id="A41900">
    <property type="entry name" value="A41900"/>
</dbReference>
<dbReference type="RefSeq" id="NP_414872.3">
    <property type="nucleotide sequence ID" value="NC_000913.3"/>
</dbReference>
<dbReference type="RefSeq" id="WP_000952503.1">
    <property type="nucleotide sequence ID" value="NZ_SSZK01000061.1"/>
</dbReference>
<dbReference type="PDB" id="2HXR">
    <property type="method" value="X-ray"/>
    <property type="resolution" value="2.05 A"/>
    <property type="chains" value="A/B=63-299"/>
</dbReference>
<dbReference type="PDB" id="3HFU">
    <property type="method" value="X-ray"/>
    <property type="resolution" value="2.60 A"/>
    <property type="chains" value="A/B/C/D=63-299"/>
</dbReference>
<dbReference type="PDBsum" id="2HXR"/>
<dbReference type="PDBsum" id="3HFU"/>
<dbReference type="SMR" id="P27111"/>
<dbReference type="BioGRID" id="4259814">
    <property type="interactions" value="127"/>
</dbReference>
<dbReference type="DIP" id="DIP-9364N"/>
<dbReference type="FunCoup" id="P27111">
    <property type="interactions" value="108"/>
</dbReference>
<dbReference type="STRING" id="511145.b0338"/>
<dbReference type="PaxDb" id="511145-b0338"/>
<dbReference type="EnsemblBacteria" id="AAC73441">
    <property type="protein sequence ID" value="AAC73441"/>
    <property type="gene ID" value="b0338"/>
</dbReference>
<dbReference type="GeneID" id="945001"/>
<dbReference type="KEGG" id="ecj:JW5894"/>
<dbReference type="KEGG" id="eco:b0338"/>
<dbReference type="KEGG" id="ecoc:C3026_01655"/>
<dbReference type="KEGG" id="ecoc:C3026_24825"/>
<dbReference type="PATRIC" id="fig|511145.12.peg.346"/>
<dbReference type="EchoBASE" id="EB1391"/>
<dbReference type="eggNOG" id="COG0583">
    <property type="taxonomic scope" value="Bacteria"/>
</dbReference>
<dbReference type="HOGENOM" id="CLU_039613_6_0_6"/>
<dbReference type="InParanoid" id="P27111"/>
<dbReference type="OMA" id="ECGSLDW"/>
<dbReference type="OrthoDB" id="646694at2"/>
<dbReference type="PhylomeDB" id="P27111"/>
<dbReference type="BioCyc" id="EcoCyc:PD00291"/>
<dbReference type="EvolutionaryTrace" id="P27111"/>
<dbReference type="PRO" id="PR:P27111"/>
<dbReference type="Proteomes" id="UP000000625">
    <property type="component" value="Chromosome"/>
</dbReference>
<dbReference type="GO" id="GO:0005737">
    <property type="term" value="C:cytoplasm"/>
    <property type="evidence" value="ECO:0007669"/>
    <property type="project" value="UniProtKB-SubCell"/>
</dbReference>
<dbReference type="GO" id="GO:0032993">
    <property type="term" value="C:protein-DNA complex"/>
    <property type="evidence" value="ECO:0000318"/>
    <property type="project" value="GO_Central"/>
</dbReference>
<dbReference type="GO" id="GO:0003677">
    <property type="term" value="F:DNA binding"/>
    <property type="evidence" value="ECO:0007669"/>
    <property type="project" value="UniProtKB-KW"/>
</dbReference>
<dbReference type="GO" id="GO:0003700">
    <property type="term" value="F:DNA-binding transcription factor activity"/>
    <property type="evidence" value="ECO:0000318"/>
    <property type="project" value="GO_Central"/>
</dbReference>
<dbReference type="GO" id="GO:0006355">
    <property type="term" value="P:regulation of DNA-templated transcription"/>
    <property type="evidence" value="ECO:0000318"/>
    <property type="project" value="GO_Central"/>
</dbReference>
<dbReference type="CDD" id="cd08425">
    <property type="entry name" value="PBP2_CynR"/>
    <property type="match status" value="1"/>
</dbReference>
<dbReference type="FunFam" id="1.10.10.10:FF:000001">
    <property type="entry name" value="LysR family transcriptional regulator"/>
    <property type="match status" value="1"/>
</dbReference>
<dbReference type="Gene3D" id="3.40.190.290">
    <property type="match status" value="1"/>
</dbReference>
<dbReference type="Gene3D" id="1.10.10.10">
    <property type="entry name" value="Winged helix-like DNA-binding domain superfamily/Winged helix DNA-binding domain"/>
    <property type="match status" value="1"/>
</dbReference>
<dbReference type="InterPro" id="IPR037403">
    <property type="entry name" value="CynR_PBP2"/>
</dbReference>
<dbReference type="InterPro" id="IPR050950">
    <property type="entry name" value="HTH-type_LysR_regulators"/>
</dbReference>
<dbReference type="InterPro" id="IPR005119">
    <property type="entry name" value="LysR_subst-bd"/>
</dbReference>
<dbReference type="InterPro" id="IPR000847">
    <property type="entry name" value="Tscrpt_reg_HTH_LysR"/>
</dbReference>
<dbReference type="InterPro" id="IPR036388">
    <property type="entry name" value="WH-like_DNA-bd_sf"/>
</dbReference>
<dbReference type="InterPro" id="IPR036390">
    <property type="entry name" value="WH_DNA-bd_sf"/>
</dbReference>
<dbReference type="NCBIfam" id="NF008416">
    <property type="entry name" value="PRK11242.1"/>
    <property type="match status" value="1"/>
</dbReference>
<dbReference type="PANTHER" id="PTHR30419">
    <property type="entry name" value="HTH-TYPE TRANSCRIPTIONAL REGULATOR YBHD"/>
    <property type="match status" value="1"/>
</dbReference>
<dbReference type="PANTHER" id="PTHR30419:SF8">
    <property type="entry name" value="NITROGEN ASSIMILATION TRANSCRIPTIONAL ACTIVATOR-RELATED"/>
    <property type="match status" value="1"/>
</dbReference>
<dbReference type="Pfam" id="PF00126">
    <property type="entry name" value="HTH_1"/>
    <property type="match status" value="1"/>
</dbReference>
<dbReference type="Pfam" id="PF03466">
    <property type="entry name" value="LysR_substrate"/>
    <property type="match status" value="1"/>
</dbReference>
<dbReference type="PRINTS" id="PR00039">
    <property type="entry name" value="HTHLYSR"/>
</dbReference>
<dbReference type="SUPFAM" id="SSF53850">
    <property type="entry name" value="Periplasmic binding protein-like II"/>
    <property type="match status" value="1"/>
</dbReference>
<dbReference type="SUPFAM" id="SSF46785">
    <property type="entry name" value="Winged helix' DNA-binding domain"/>
    <property type="match status" value="1"/>
</dbReference>
<dbReference type="PROSITE" id="PS50931">
    <property type="entry name" value="HTH_LYSR"/>
    <property type="match status" value="1"/>
</dbReference>
<feature type="chain" id="PRO_0000105612" description="HTH-type transcriptional regulator CynR">
    <location>
        <begin position="1"/>
        <end position="299"/>
    </location>
</feature>
<feature type="domain" description="HTH lysR-type" evidence="1">
    <location>
        <begin position="1"/>
        <end position="58"/>
    </location>
</feature>
<feature type="DNA-binding region" description="H-T-H motif" evidence="1">
    <location>
        <begin position="18"/>
        <end position="37"/>
    </location>
</feature>
<feature type="strand" evidence="4">
    <location>
        <begin position="93"/>
        <end position="97"/>
    </location>
</feature>
<feature type="helix" evidence="4">
    <location>
        <begin position="99"/>
        <end position="102"/>
    </location>
</feature>
<feature type="turn" evidence="4">
    <location>
        <begin position="103"/>
        <end position="105"/>
    </location>
</feature>
<feature type="helix" evidence="4">
    <location>
        <begin position="106"/>
        <end position="116"/>
    </location>
</feature>
<feature type="strand" evidence="4">
    <location>
        <begin position="122"/>
        <end position="126"/>
    </location>
</feature>
<feature type="helix" evidence="4">
    <location>
        <begin position="129"/>
        <end position="137"/>
    </location>
</feature>
<feature type="strand" evidence="4">
    <location>
        <begin position="142"/>
        <end position="149"/>
    </location>
</feature>
<feature type="strand" evidence="4">
    <location>
        <begin position="155"/>
        <end position="170"/>
    </location>
</feature>
<feature type="helix" evidence="4">
    <location>
        <begin position="174"/>
        <end position="177"/>
    </location>
</feature>
<feature type="strand" evidence="4">
    <location>
        <begin position="179"/>
        <end position="181"/>
    </location>
</feature>
<feature type="helix" evidence="4">
    <location>
        <begin position="183"/>
        <end position="188"/>
    </location>
</feature>
<feature type="strand" evidence="4">
    <location>
        <begin position="190"/>
        <end position="194"/>
    </location>
</feature>
<feature type="helix" evidence="4">
    <location>
        <begin position="199"/>
        <end position="210"/>
    </location>
</feature>
<feature type="strand" evidence="4">
    <location>
        <begin position="216"/>
        <end position="222"/>
    </location>
</feature>
<feature type="helix" evidence="4">
    <location>
        <begin position="224"/>
        <end position="233"/>
    </location>
</feature>
<feature type="strand" evidence="4">
    <location>
        <begin position="237"/>
        <end position="241"/>
    </location>
</feature>
<feature type="helix" evidence="4">
    <location>
        <begin position="243"/>
        <end position="247"/>
    </location>
</feature>
<feature type="strand" evidence="4">
    <location>
        <begin position="251"/>
        <end position="258"/>
    </location>
</feature>
<feature type="strand" evidence="4">
    <location>
        <begin position="262"/>
        <end position="270"/>
    </location>
</feature>
<feature type="helix" evidence="4">
    <location>
        <begin position="277"/>
        <end position="290"/>
    </location>
</feature>
<organism>
    <name type="scientific">Escherichia coli (strain K12)</name>
    <dbReference type="NCBI Taxonomy" id="83333"/>
    <lineage>
        <taxon>Bacteria</taxon>
        <taxon>Pseudomonadati</taxon>
        <taxon>Pseudomonadota</taxon>
        <taxon>Gammaproteobacteria</taxon>
        <taxon>Enterobacterales</taxon>
        <taxon>Enterobacteriaceae</taxon>
        <taxon>Escherichia</taxon>
    </lineage>
</organism>
<keyword id="KW-0002">3D-structure</keyword>
<keyword id="KW-0010">Activator</keyword>
<keyword id="KW-0963">Cytoplasm</keyword>
<keyword id="KW-0238">DNA-binding</keyword>
<keyword id="KW-1185">Reference proteome</keyword>
<keyword id="KW-0678">Repressor</keyword>
<keyword id="KW-0804">Transcription</keyword>
<keyword id="KW-0805">Transcription regulation</keyword>
<gene>
    <name type="primary">cynR</name>
    <name type="ordered locus">b0338</name>
    <name type="ordered locus">JW5894</name>
</gene>
<accession>P27111</accession>
<accession>Q2MC86</accession>
<reference key="1">
    <citation type="journal article" date="1992" name="J. Bacteriol.">
        <title>The Escherichia coli K-12 cyn operon is positively regulated by a member of the lysR family.</title>
        <authorList>
            <person name="Sung Y.-C."/>
            <person name="Fuchs J.A."/>
        </authorList>
    </citation>
    <scope>NUCLEOTIDE SEQUENCE [GENOMIC DNA]</scope>
    <scope>FUNCTION AS TRANSCRIPTIONAL REGULATOR</scope>
    <scope>INDUCTION</scope>
    <source>
        <strain>K12</strain>
    </source>
</reference>
<reference key="2">
    <citation type="submission" date="1997-01" db="EMBL/GenBank/DDBJ databases">
        <title>Sequence of minutes 4-25 of Escherichia coli.</title>
        <authorList>
            <person name="Chung E."/>
            <person name="Allen E."/>
            <person name="Araujo R."/>
            <person name="Aparicio A.M."/>
            <person name="Davis K."/>
            <person name="Duncan M."/>
            <person name="Federspiel N."/>
            <person name="Hyman R."/>
            <person name="Kalman S."/>
            <person name="Komp C."/>
            <person name="Kurdi O."/>
            <person name="Lew H."/>
            <person name="Lin D."/>
            <person name="Namath A."/>
            <person name="Oefner P."/>
            <person name="Roberts D."/>
            <person name="Schramm S."/>
            <person name="Davis R.W."/>
        </authorList>
    </citation>
    <scope>NUCLEOTIDE SEQUENCE [LARGE SCALE GENOMIC DNA]</scope>
    <source>
        <strain>K12 / MG1655 / ATCC 47076</strain>
    </source>
</reference>
<reference key="3">
    <citation type="journal article" date="1997" name="Science">
        <title>The complete genome sequence of Escherichia coli K-12.</title>
        <authorList>
            <person name="Blattner F.R."/>
            <person name="Plunkett G. III"/>
            <person name="Bloch C.A."/>
            <person name="Perna N.T."/>
            <person name="Burland V."/>
            <person name="Riley M."/>
            <person name="Collado-Vides J."/>
            <person name="Glasner J.D."/>
            <person name="Rode C.K."/>
            <person name="Mayhew G.F."/>
            <person name="Gregor J."/>
            <person name="Davis N.W."/>
            <person name="Kirkpatrick H.A."/>
            <person name="Goeden M.A."/>
            <person name="Rose D.J."/>
            <person name="Mau B."/>
            <person name="Shao Y."/>
        </authorList>
    </citation>
    <scope>NUCLEOTIDE SEQUENCE [LARGE SCALE GENOMIC DNA]</scope>
    <source>
        <strain>K12 / MG1655 / ATCC 47076</strain>
    </source>
</reference>
<reference key="4">
    <citation type="journal article" date="2006" name="Mol. Syst. Biol.">
        <title>Highly accurate genome sequences of Escherichia coli K-12 strains MG1655 and W3110.</title>
        <authorList>
            <person name="Hayashi K."/>
            <person name="Morooka N."/>
            <person name="Yamamoto Y."/>
            <person name="Fujita K."/>
            <person name="Isono K."/>
            <person name="Choi S."/>
            <person name="Ohtsubo E."/>
            <person name="Baba T."/>
            <person name="Wanner B.L."/>
            <person name="Mori H."/>
            <person name="Horiuchi T."/>
        </authorList>
    </citation>
    <scope>NUCLEOTIDE SEQUENCE [LARGE SCALE GENOMIC DNA]</scope>
    <source>
        <strain>K12 / W3110 / ATCC 27325 / DSM 5911</strain>
    </source>
</reference>
<reference key="5">
    <citation type="journal article" date="1993" name="J. Bacteriol.">
        <title>Expression and purification of the cynR regulatory gene product: CynR is a DNA-binding protein.</title>
        <authorList>
            <person name="Lamblin A.-F.J."/>
            <person name="Fuchs J.A."/>
        </authorList>
    </citation>
    <scope>IDENTIFICATION OF START CODON</scope>
    <scope>DNA-BINDING</scope>
</reference>
<comment type="function">
    <text evidence="2">Positively regulates the cynTSX operon, and negatively regulates its own transcription. Binds specifically to the cynR-cynTSX intergenic region.</text>
</comment>
<comment type="subcellular location">
    <subcellularLocation>
        <location>Cytoplasm</location>
    </subcellularLocation>
</comment>
<comment type="induction">
    <text evidence="2">Negatively autoregulated.</text>
</comment>
<comment type="similarity">
    <text evidence="3">Belongs to the LysR transcriptional regulatory family.</text>
</comment>
<comment type="sequence caution" evidence="3">
    <conflict type="erroneous initiation">
        <sequence resource="EMBL-CDS" id="AAB18062"/>
    </conflict>
</comment>
<proteinExistence type="evidence at protein level"/>
<sequence>MLSRHINYFLAVAEHGSFTRAASALHVSQPALSQQIRQLEESLGVPLFDRSGRTIRLTDAGEVWRQYASRALQELGAGKRAIHDVADLTRGSLRIAVTPTFTSYFIGPLMADFYARYPSITLQLQEMSQEKIEDMLCRDELDVGIAFAPVHSPELEAIPLLTESLALVVAQHHPLAVHEQVALSRLHDEKLVLLSAEFATREQIDHYCEKAGLHPQVVIEANSISAVLELIRRTSLSTLLPAAIATQHDGLKAISLAPPLLERTAVLLRRKNSWQTAAAKAFLHMALDKCAVVGGNESR</sequence>
<protein>
    <recommendedName>
        <fullName>HTH-type transcriptional regulator CynR</fullName>
    </recommendedName>
    <alternativeName>
        <fullName>Cyn operon transcriptional activator</fullName>
    </alternativeName>
</protein>
<name>CYNR_ECOLI</name>